<dbReference type="EMBL" id="U00090">
    <property type="protein sequence ID" value="AAB91646.1"/>
    <property type="molecule type" value="Genomic_DNA"/>
</dbReference>
<dbReference type="RefSeq" id="NP_443826.1">
    <property type="nucleotide sequence ID" value="NC_000914.2"/>
</dbReference>
<dbReference type="RefSeq" id="WP_010875412.1">
    <property type="nucleotide sequence ID" value="NC_000914.2"/>
</dbReference>
<dbReference type="KEGG" id="rhi:NGR_a04000"/>
<dbReference type="PATRIC" id="fig|394.7.peg.421"/>
<dbReference type="eggNOG" id="COG0388">
    <property type="taxonomic scope" value="Bacteria"/>
</dbReference>
<dbReference type="HOGENOM" id="CLU_042375_0_0_5"/>
<dbReference type="OrthoDB" id="8206526at2"/>
<dbReference type="Proteomes" id="UP000001054">
    <property type="component" value="Plasmid pNGR234a"/>
</dbReference>
<dbReference type="GO" id="GO:0005886">
    <property type="term" value="C:plasma membrane"/>
    <property type="evidence" value="ECO:0007669"/>
    <property type="project" value="UniProtKB-SubCell"/>
</dbReference>
<dbReference type="Gene3D" id="3.60.110.10">
    <property type="entry name" value="Carbon-nitrogen hydrolase"/>
    <property type="match status" value="1"/>
</dbReference>
<dbReference type="InterPro" id="IPR003010">
    <property type="entry name" value="C-N_Hydrolase"/>
</dbReference>
<dbReference type="InterPro" id="IPR036526">
    <property type="entry name" value="C-N_Hydrolase_sf"/>
</dbReference>
<dbReference type="InterPro" id="IPR016707">
    <property type="entry name" value="Conjugal_tfr_TraB_rhizob"/>
</dbReference>
<dbReference type="NCBIfam" id="NF010398">
    <property type="entry name" value="PRK13825.1-2"/>
    <property type="match status" value="1"/>
</dbReference>
<dbReference type="NCBIfam" id="NF010400">
    <property type="entry name" value="PRK13825.1-4"/>
    <property type="match status" value="1"/>
</dbReference>
<dbReference type="Pfam" id="PF00795">
    <property type="entry name" value="CN_hydrolase"/>
    <property type="match status" value="1"/>
</dbReference>
<dbReference type="PIRSF" id="PIRSF017932">
    <property type="entry name" value="Conjugal_transfer_TraB_rhizob"/>
    <property type="match status" value="1"/>
</dbReference>
<dbReference type="SUPFAM" id="SSF56317">
    <property type="entry name" value="Carbon-nitrogen hydrolase"/>
    <property type="match status" value="1"/>
</dbReference>
<dbReference type="PROSITE" id="PS50263">
    <property type="entry name" value="CN_HYDROLASE"/>
    <property type="match status" value="1"/>
</dbReference>
<accession>P55416</accession>
<name>TRAB_SINFN</name>
<comment type="function">
    <text evidence="3">Enhances conjugal transfer of the plasmid.</text>
</comment>
<comment type="subcellular location">
    <subcellularLocation>
        <location evidence="3">Cell membrane</location>
        <topology evidence="3">Multi-pass membrane protein</topology>
    </subcellularLocation>
</comment>
<comment type="similarity">
    <text evidence="3">To A.tumefaciens Ti plasmid TraB.</text>
</comment>
<organism>
    <name type="scientific">Sinorhizobium fredii (strain NBRC 101917 / NGR234)</name>
    <dbReference type="NCBI Taxonomy" id="394"/>
    <lineage>
        <taxon>Bacteria</taxon>
        <taxon>Pseudomonadati</taxon>
        <taxon>Pseudomonadota</taxon>
        <taxon>Alphaproteobacteria</taxon>
        <taxon>Hyphomicrobiales</taxon>
        <taxon>Rhizobiaceae</taxon>
        <taxon>Sinorhizobium/Ensifer group</taxon>
        <taxon>Sinorhizobium</taxon>
    </lineage>
</organism>
<gene>
    <name type="primary">traB</name>
    <name type="ordered locus">NGR_a04000</name>
    <name type="ORF">y4dQ</name>
</gene>
<proteinExistence type="predicted"/>
<geneLocation type="plasmid">
    <name>sym pNGR234a</name>
</geneLocation>
<reference key="1">
    <citation type="journal article" date="1997" name="Nature">
        <title>Molecular basis of symbiosis between Rhizobium and legumes.</title>
        <authorList>
            <person name="Freiberg C.A."/>
            <person name="Fellay R."/>
            <person name="Bairoch A."/>
            <person name="Broughton W.J."/>
            <person name="Rosenthal A."/>
            <person name="Perret X."/>
        </authorList>
    </citation>
    <scope>NUCLEOTIDE SEQUENCE [LARGE SCALE GENOMIC DNA]</scope>
    <source>
        <strain>NBRC 101917 / NGR234</strain>
    </source>
</reference>
<reference key="2">
    <citation type="journal article" date="2009" name="Appl. Environ. Microbiol.">
        <title>Rhizobium sp. strain NGR234 possesses a remarkable number of secretion systems.</title>
        <authorList>
            <person name="Schmeisser C."/>
            <person name="Liesegang H."/>
            <person name="Krysciak D."/>
            <person name="Bakkou N."/>
            <person name="Le Quere A."/>
            <person name="Wollherr A."/>
            <person name="Heinemeyer I."/>
            <person name="Morgenstern B."/>
            <person name="Pommerening-Roeser A."/>
            <person name="Flores M."/>
            <person name="Palacios R."/>
            <person name="Brenner S."/>
            <person name="Gottschalk G."/>
            <person name="Schmitz R.A."/>
            <person name="Broughton W.J."/>
            <person name="Perret X."/>
            <person name="Strittmatter A.W."/>
            <person name="Streit W.R."/>
        </authorList>
    </citation>
    <scope>NUCLEOTIDE SEQUENCE [LARGE SCALE GENOMIC DNA]</scope>
    <source>
        <strain>NBRC 101917 / NGR234</strain>
    </source>
</reference>
<sequence length="387" mass="42199">MRRDHLQPRLLTIASIVVGTVGWSGYALLLPVALAFPILWSRARTRRVAALVSAGYFLAASRGLPQGVAAFYTSDLWPGLLLWLCASGSFVVVHTVLWTKRSDCRPFRYLLAAVLMAVPPMGITGWAHPVTAAGILFPGWGWWGLVATTAGLMGLVTRMWPAVAIAFTGFWLWSAANWTESKLPASWQGVDLKLGSTLGRNTSIQRHRDLIATVKDRASGGVRNVVLPESALGFWTPTFERLWVKALQGTEISVISGAAAIDATGYDNVLVTLSADGGRVLYRERMPVPGSMWQPWGSWLGESDGARAHFFANPVVTVGNSRVAPLICYEQLVVWPTLQSMLYEPDLIVAVGNGWWTKGTSIVAIQRVNAIAWAKLFAKPLVLSFNT</sequence>
<protein>
    <recommendedName>
        <fullName>Probable conjugal transfer protein TraB</fullName>
    </recommendedName>
</protein>
<evidence type="ECO:0000255" key="1"/>
<evidence type="ECO:0000255" key="2">
    <source>
        <dbReference type="PROSITE-ProRule" id="PRU00054"/>
    </source>
</evidence>
<evidence type="ECO:0000305" key="3"/>
<feature type="chain" id="PRO_0000065597" description="Probable conjugal transfer protein TraB">
    <location>
        <begin position="1"/>
        <end position="387"/>
    </location>
</feature>
<feature type="transmembrane region" description="Helical" evidence="1">
    <location>
        <begin position="16"/>
        <end position="36"/>
    </location>
</feature>
<feature type="transmembrane region" description="Helical" evidence="1">
    <location>
        <begin position="51"/>
        <end position="71"/>
    </location>
</feature>
<feature type="transmembrane region" description="Helical" evidence="1">
    <location>
        <begin position="76"/>
        <end position="96"/>
    </location>
</feature>
<feature type="transmembrane region" description="Helical" evidence="1">
    <location>
        <begin position="110"/>
        <end position="130"/>
    </location>
</feature>
<feature type="transmembrane region" description="Helical" evidence="1">
    <location>
        <begin position="135"/>
        <end position="155"/>
    </location>
</feature>
<feature type="transmembrane region" description="Helical" evidence="1">
    <location>
        <begin position="159"/>
        <end position="179"/>
    </location>
</feature>
<feature type="transmembrane region" description="Helical" evidence="1">
    <location>
        <begin position="252"/>
        <end position="272"/>
    </location>
</feature>
<feature type="transmembrane region" description="Helical" evidence="1">
    <location>
        <begin position="332"/>
        <end position="352"/>
    </location>
</feature>
<feature type="domain" description="CN hydrolase" evidence="2">
    <location>
        <begin position="187"/>
        <end position="387"/>
    </location>
</feature>
<keyword id="KW-1003">Cell membrane</keyword>
<keyword id="KW-0184">Conjugation</keyword>
<keyword id="KW-0472">Membrane</keyword>
<keyword id="KW-0614">Plasmid</keyword>
<keyword id="KW-1185">Reference proteome</keyword>
<keyword id="KW-0812">Transmembrane</keyword>
<keyword id="KW-1133">Transmembrane helix</keyword>